<proteinExistence type="evidence at protein level"/>
<reference key="1">
    <citation type="journal article" date="1999" name="Am. J. Hum. Genet.">
        <title>Characterization and mutation analysis of human LEFTY A and LEFTY B, homologues of murine genes implicated in left-right axis development.</title>
        <authorList>
            <person name="Kosaki K."/>
            <person name="Bassi M.T."/>
            <person name="Kosaki R."/>
            <person name="Lewin M."/>
            <person name="Belmont J."/>
            <person name="Schauer G."/>
            <person name="Casey B."/>
        </authorList>
    </citation>
    <scope>NUCLEOTIDE SEQUENCE [GENOMIC DNA / MRNA]</scope>
    <source>
        <tissue>Teratocarcinoma</tissue>
    </source>
</reference>
<reference key="2">
    <citation type="journal article" date="2003" name="Genome Res.">
        <title>The secreted protein discovery initiative (SPDI), a large-scale effort to identify novel human secreted and transmembrane proteins: a bioinformatics assessment.</title>
        <authorList>
            <person name="Clark H.F."/>
            <person name="Gurney A.L."/>
            <person name="Abaya E."/>
            <person name="Baker K."/>
            <person name="Baldwin D.T."/>
            <person name="Brush J."/>
            <person name="Chen J."/>
            <person name="Chow B."/>
            <person name="Chui C."/>
            <person name="Crowley C."/>
            <person name="Currell B."/>
            <person name="Deuel B."/>
            <person name="Dowd P."/>
            <person name="Eaton D."/>
            <person name="Foster J.S."/>
            <person name="Grimaldi C."/>
            <person name="Gu Q."/>
            <person name="Hass P.E."/>
            <person name="Heldens S."/>
            <person name="Huang A."/>
            <person name="Kim H.S."/>
            <person name="Klimowski L."/>
            <person name="Jin Y."/>
            <person name="Johnson S."/>
            <person name="Lee J."/>
            <person name="Lewis L."/>
            <person name="Liao D."/>
            <person name="Mark M.R."/>
            <person name="Robbie E."/>
            <person name="Sanchez C."/>
            <person name="Schoenfeld J."/>
            <person name="Seshagiri S."/>
            <person name="Simmons L."/>
            <person name="Singh J."/>
            <person name="Smith V."/>
            <person name="Stinson J."/>
            <person name="Vagts A."/>
            <person name="Vandlen R.L."/>
            <person name="Watanabe C."/>
            <person name="Wieand D."/>
            <person name="Woods K."/>
            <person name="Xie M.-H."/>
            <person name="Yansura D.G."/>
            <person name="Yi S."/>
            <person name="Yu G."/>
            <person name="Yuan J."/>
            <person name="Zhang M."/>
            <person name="Zhang Z."/>
            <person name="Goddard A.D."/>
            <person name="Wood W.I."/>
            <person name="Godowski P.J."/>
            <person name="Gray A.M."/>
        </authorList>
    </citation>
    <scope>NUCLEOTIDE SEQUENCE [LARGE SCALE MRNA]</scope>
</reference>
<reference key="3">
    <citation type="journal article" date="2004" name="Nat. Genet.">
        <title>Complete sequencing and characterization of 21,243 full-length human cDNAs.</title>
        <authorList>
            <person name="Ota T."/>
            <person name="Suzuki Y."/>
            <person name="Nishikawa T."/>
            <person name="Otsuki T."/>
            <person name="Sugiyama T."/>
            <person name="Irie R."/>
            <person name="Wakamatsu A."/>
            <person name="Hayashi K."/>
            <person name="Sato H."/>
            <person name="Nagai K."/>
            <person name="Kimura K."/>
            <person name="Makita H."/>
            <person name="Sekine M."/>
            <person name="Obayashi M."/>
            <person name="Nishi T."/>
            <person name="Shibahara T."/>
            <person name="Tanaka T."/>
            <person name="Ishii S."/>
            <person name="Yamamoto J."/>
            <person name="Saito K."/>
            <person name="Kawai Y."/>
            <person name="Isono Y."/>
            <person name="Nakamura Y."/>
            <person name="Nagahari K."/>
            <person name="Murakami K."/>
            <person name="Yasuda T."/>
            <person name="Iwayanagi T."/>
            <person name="Wagatsuma M."/>
            <person name="Shiratori A."/>
            <person name="Sudo H."/>
            <person name="Hosoiri T."/>
            <person name="Kaku Y."/>
            <person name="Kodaira H."/>
            <person name="Kondo H."/>
            <person name="Sugawara M."/>
            <person name="Takahashi M."/>
            <person name="Kanda K."/>
            <person name="Yokoi T."/>
            <person name="Furuya T."/>
            <person name="Kikkawa E."/>
            <person name="Omura Y."/>
            <person name="Abe K."/>
            <person name="Kamihara K."/>
            <person name="Katsuta N."/>
            <person name="Sato K."/>
            <person name="Tanikawa M."/>
            <person name="Yamazaki M."/>
            <person name="Ninomiya K."/>
            <person name="Ishibashi T."/>
            <person name="Yamashita H."/>
            <person name="Murakawa K."/>
            <person name="Fujimori K."/>
            <person name="Tanai H."/>
            <person name="Kimata M."/>
            <person name="Watanabe M."/>
            <person name="Hiraoka S."/>
            <person name="Chiba Y."/>
            <person name="Ishida S."/>
            <person name="Ono Y."/>
            <person name="Takiguchi S."/>
            <person name="Watanabe S."/>
            <person name="Yosida M."/>
            <person name="Hotuta T."/>
            <person name="Kusano J."/>
            <person name="Kanehori K."/>
            <person name="Takahashi-Fujii A."/>
            <person name="Hara H."/>
            <person name="Tanase T.-O."/>
            <person name="Nomura Y."/>
            <person name="Togiya S."/>
            <person name="Komai F."/>
            <person name="Hara R."/>
            <person name="Takeuchi K."/>
            <person name="Arita M."/>
            <person name="Imose N."/>
            <person name="Musashino K."/>
            <person name="Yuuki H."/>
            <person name="Oshima A."/>
            <person name="Sasaki N."/>
            <person name="Aotsuka S."/>
            <person name="Yoshikawa Y."/>
            <person name="Matsunawa H."/>
            <person name="Ichihara T."/>
            <person name="Shiohata N."/>
            <person name="Sano S."/>
            <person name="Moriya S."/>
            <person name="Momiyama H."/>
            <person name="Satoh N."/>
            <person name="Takami S."/>
            <person name="Terashima Y."/>
            <person name="Suzuki O."/>
            <person name="Nakagawa S."/>
            <person name="Senoh A."/>
            <person name="Mizoguchi H."/>
            <person name="Goto Y."/>
            <person name="Shimizu F."/>
            <person name="Wakebe H."/>
            <person name="Hishigaki H."/>
            <person name="Watanabe T."/>
            <person name="Sugiyama A."/>
            <person name="Takemoto M."/>
            <person name="Kawakami B."/>
            <person name="Yamazaki M."/>
            <person name="Watanabe K."/>
            <person name="Kumagai A."/>
            <person name="Itakura S."/>
            <person name="Fukuzumi Y."/>
            <person name="Fujimori Y."/>
            <person name="Komiyama M."/>
            <person name="Tashiro H."/>
            <person name="Tanigami A."/>
            <person name="Fujiwara T."/>
            <person name="Ono T."/>
            <person name="Yamada K."/>
            <person name="Fujii Y."/>
            <person name="Ozaki K."/>
            <person name="Hirao M."/>
            <person name="Ohmori Y."/>
            <person name="Kawabata A."/>
            <person name="Hikiji T."/>
            <person name="Kobatake N."/>
            <person name="Inagaki H."/>
            <person name="Ikema Y."/>
            <person name="Okamoto S."/>
            <person name="Okitani R."/>
            <person name="Kawakami T."/>
            <person name="Noguchi S."/>
            <person name="Itoh T."/>
            <person name="Shigeta K."/>
            <person name="Senba T."/>
            <person name="Matsumura K."/>
            <person name="Nakajima Y."/>
            <person name="Mizuno T."/>
            <person name="Morinaga M."/>
            <person name="Sasaki M."/>
            <person name="Togashi T."/>
            <person name="Oyama M."/>
            <person name="Hata H."/>
            <person name="Watanabe M."/>
            <person name="Komatsu T."/>
            <person name="Mizushima-Sugano J."/>
            <person name="Satoh T."/>
            <person name="Shirai Y."/>
            <person name="Takahashi Y."/>
            <person name="Nakagawa K."/>
            <person name="Okumura K."/>
            <person name="Nagase T."/>
            <person name="Nomura N."/>
            <person name="Kikuchi H."/>
            <person name="Masuho Y."/>
            <person name="Yamashita R."/>
            <person name="Nakai K."/>
            <person name="Yada T."/>
            <person name="Nakamura Y."/>
            <person name="Ohara O."/>
            <person name="Isogai T."/>
            <person name="Sugano S."/>
        </authorList>
    </citation>
    <scope>NUCLEOTIDE SEQUENCE [LARGE SCALE MRNA]</scope>
    <scope>VARIANTS SER-92 AND GLN-142</scope>
    <source>
        <tissue>Colon</tissue>
    </source>
</reference>
<reference key="4">
    <citation type="submission" date="2005-04" db="EMBL/GenBank/DDBJ databases">
        <authorList>
            <person name="Suzuki Y."/>
            <person name="Sugano S."/>
            <person name="Totoki Y."/>
            <person name="Toyoda A."/>
            <person name="Takeda T."/>
            <person name="Sakaki Y."/>
            <person name="Tanaka A."/>
            <person name="Yokoyama S."/>
        </authorList>
    </citation>
    <scope>NUCLEOTIDE SEQUENCE [LARGE SCALE MRNA]</scope>
    <scope>VARIANTS SER-92 AND GLN-142</scope>
    <source>
        <tissue>Colon</tissue>
    </source>
</reference>
<reference key="5">
    <citation type="journal article" date="2006" name="Nature">
        <title>The DNA sequence and biological annotation of human chromosome 1.</title>
        <authorList>
            <person name="Gregory S.G."/>
            <person name="Barlow K.F."/>
            <person name="McLay K.E."/>
            <person name="Kaul R."/>
            <person name="Swarbreck D."/>
            <person name="Dunham A."/>
            <person name="Scott C.E."/>
            <person name="Howe K.L."/>
            <person name="Woodfine K."/>
            <person name="Spencer C.C.A."/>
            <person name="Jones M.C."/>
            <person name="Gillson C."/>
            <person name="Searle S."/>
            <person name="Zhou Y."/>
            <person name="Kokocinski F."/>
            <person name="McDonald L."/>
            <person name="Evans R."/>
            <person name="Phillips K."/>
            <person name="Atkinson A."/>
            <person name="Cooper R."/>
            <person name="Jones C."/>
            <person name="Hall R.E."/>
            <person name="Andrews T.D."/>
            <person name="Lloyd C."/>
            <person name="Ainscough R."/>
            <person name="Almeida J.P."/>
            <person name="Ambrose K.D."/>
            <person name="Anderson F."/>
            <person name="Andrew R.W."/>
            <person name="Ashwell R.I.S."/>
            <person name="Aubin K."/>
            <person name="Babbage A.K."/>
            <person name="Bagguley C.L."/>
            <person name="Bailey J."/>
            <person name="Beasley H."/>
            <person name="Bethel G."/>
            <person name="Bird C.P."/>
            <person name="Bray-Allen S."/>
            <person name="Brown J.Y."/>
            <person name="Brown A.J."/>
            <person name="Buckley D."/>
            <person name="Burton J."/>
            <person name="Bye J."/>
            <person name="Carder C."/>
            <person name="Chapman J.C."/>
            <person name="Clark S.Y."/>
            <person name="Clarke G."/>
            <person name="Clee C."/>
            <person name="Cobley V."/>
            <person name="Collier R.E."/>
            <person name="Corby N."/>
            <person name="Coville G.J."/>
            <person name="Davies J."/>
            <person name="Deadman R."/>
            <person name="Dunn M."/>
            <person name="Earthrowl M."/>
            <person name="Ellington A.G."/>
            <person name="Errington H."/>
            <person name="Frankish A."/>
            <person name="Frankland J."/>
            <person name="French L."/>
            <person name="Garner P."/>
            <person name="Garnett J."/>
            <person name="Gay L."/>
            <person name="Ghori M.R.J."/>
            <person name="Gibson R."/>
            <person name="Gilby L.M."/>
            <person name="Gillett W."/>
            <person name="Glithero R.J."/>
            <person name="Grafham D.V."/>
            <person name="Griffiths C."/>
            <person name="Griffiths-Jones S."/>
            <person name="Grocock R."/>
            <person name="Hammond S."/>
            <person name="Harrison E.S.I."/>
            <person name="Hart E."/>
            <person name="Haugen E."/>
            <person name="Heath P.D."/>
            <person name="Holmes S."/>
            <person name="Holt K."/>
            <person name="Howden P.J."/>
            <person name="Hunt A.R."/>
            <person name="Hunt S.E."/>
            <person name="Hunter G."/>
            <person name="Isherwood J."/>
            <person name="James R."/>
            <person name="Johnson C."/>
            <person name="Johnson D."/>
            <person name="Joy A."/>
            <person name="Kay M."/>
            <person name="Kershaw J.K."/>
            <person name="Kibukawa M."/>
            <person name="Kimberley A.M."/>
            <person name="King A."/>
            <person name="Knights A.J."/>
            <person name="Lad H."/>
            <person name="Laird G."/>
            <person name="Lawlor S."/>
            <person name="Leongamornlert D.A."/>
            <person name="Lloyd D.M."/>
            <person name="Loveland J."/>
            <person name="Lovell J."/>
            <person name="Lush M.J."/>
            <person name="Lyne R."/>
            <person name="Martin S."/>
            <person name="Mashreghi-Mohammadi M."/>
            <person name="Matthews L."/>
            <person name="Matthews N.S.W."/>
            <person name="McLaren S."/>
            <person name="Milne S."/>
            <person name="Mistry S."/>
            <person name="Moore M.J.F."/>
            <person name="Nickerson T."/>
            <person name="O'Dell C.N."/>
            <person name="Oliver K."/>
            <person name="Palmeiri A."/>
            <person name="Palmer S.A."/>
            <person name="Parker A."/>
            <person name="Patel D."/>
            <person name="Pearce A.V."/>
            <person name="Peck A.I."/>
            <person name="Pelan S."/>
            <person name="Phelps K."/>
            <person name="Phillimore B.J."/>
            <person name="Plumb R."/>
            <person name="Rajan J."/>
            <person name="Raymond C."/>
            <person name="Rouse G."/>
            <person name="Saenphimmachak C."/>
            <person name="Sehra H.K."/>
            <person name="Sheridan E."/>
            <person name="Shownkeen R."/>
            <person name="Sims S."/>
            <person name="Skuce C.D."/>
            <person name="Smith M."/>
            <person name="Steward C."/>
            <person name="Subramanian S."/>
            <person name="Sycamore N."/>
            <person name="Tracey A."/>
            <person name="Tromans A."/>
            <person name="Van Helmond Z."/>
            <person name="Wall M."/>
            <person name="Wallis J.M."/>
            <person name="White S."/>
            <person name="Whitehead S.L."/>
            <person name="Wilkinson J.E."/>
            <person name="Willey D.L."/>
            <person name="Williams H."/>
            <person name="Wilming L."/>
            <person name="Wray P.W."/>
            <person name="Wu Z."/>
            <person name="Coulson A."/>
            <person name="Vaudin M."/>
            <person name="Sulston J.E."/>
            <person name="Durbin R.M."/>
            <person name="Hubbard T."/>
            <person name="Wooster R."/>
            <person name="Dunham I."/>
            <person name="Carter N.P."/>
            <person name="McVean G."/>
            <person name="Ross M.T."/>
            <person name="Harrow J."/>
            <person name="Olson M.V."/>
            <person name="Beck S."/>
            <person name="Rogers J."/>
            <person name="Bentley D.R."/>
        </authorList>
    </citation>
    <scope>NUCLEOTIDE SEQUENCE [LARGE SCALE GENOMIC DNA]</scope>
</reference>
<reference key="6">
    <citation type="journal article" date="2004" name="Genome Res.">
        <title>The status, quality, and expansion of the NIH full-length cDNA project: the Mammalian Gene Collection (MGC).</title>
        <authorList>
            <consortium name="The MGC Project Team"/>
        </authorList>
    </citation>
    <scope>NUCLEOTIDE SEQUENCE [LARGE SCALE MRNA]</scope>
    <source>
        <tissue>Pancreas</tissue>
        <tissue>Spleen</tissue>
    </source>
</reference>
<dbReference type="EMBL" id="AF081507">
    <property type="protein sequence ID" value="AAC33967.1"/>
    <property type="molecule type" value="Genomic_DNA"/>
</dbReference>
<dbReference type="EMBL" id="AF081504">
    <property type="protein sequence ID" value="AAC33967.1"/>
    <property type="status" value="JOINED"/>
    <property type="molecule type" value="Genomic_DNA"/>
</dbReference>
<dbReference type="EMBL" id="AF081505">
    <property type="protein sequence ID" value="AAC33967.1"/>
    <property type="status" value="JOINED"/>
    <property type="molecule type" value="Genomic_DNA"/>
</dbReference>
<dbReference type="EMBL" id="AF081506">
    <property type="protein sequence ID" value="AAC33967.1"/>
    <property type="status" value="JOINED"/>
    <property type="molecule type" value="Genomic_DNA"/>
</dbReference>
<dbReference type="EMBL" id="AF081512">
    <property type="protein sequence ID" value="AAD48144.1"/>
    <property type="molecule type" value="mRNA"/>
</dbReference>
<dbReference type="EMBL" id="AY358873">
    <property type="protein sequence ID" value="AAQ89232.1"/>
    <property type="molecule type" value="mRNA"/>
</dbReference>
<dbReference type="EMBL" id="AK313115">
    <property type="protein sequence ID" value="BAG35937.1"/>
    <property type="molecule type" value="mRNA"/>
</dbReference>
<dbReference type="EMBL" id="AK222714">
    <property type="protein sequence ID" value="BAD96434.1"/>
    <property type="molecule type" value="mRNA"/>
</dbReference>
<dbReference type="EMBL" id="AL117348">
    <property type="status" value="NOT_ANNOTATED_CDS"/>
    <property type="molecule type" value="Genomic_DNA"/>
</dbReference>
<dbReference type="EMBL" id="BC027883">
    <property type="protein sequence ID" value="AAH27883.1"/>
    <property type="molecule type" value="mRNA"/>
</dbReference>
<dbReference type="CCDS" id="CCDS1548.1"/>
<dbReference type="RefSeq" id="NP_066277.1">
    <property type="nucleotide sequence ID" value="NM_020997.4"/>
</dbReference>
<dbReference type="BioGRID" id="115881">
    <property type="interactions" value="7"/>
</dbReference>
<dbReference type="FunCoup" id="O75610">
    <property type="interactions" value="389"/>
</dbReference>
<dbReference type="IntAct" id="O75610">
    <property type="interactions" value="2"/>
</dbReference>
<dbReference type="STRING" id="9606.ENSP00000272134"/>
<dbReference type="GlyCosmos" id="O75610">
    <property type="glycosylation" value="1 site, No reported glycans"/>
</dbReference>
<dbReference type="GlyGen" id="O75610">
    <property type="glycosylation" value="1 site"/>
</dbReference>
<dbReference type="iPTMnet" id="O75610"/>
<dbReference type="PhosphoSitePlus" id="O75610"/>
<dbReference type="BioMuta" id="LEFTY1"/>
<dbReference type="jPOST" id="O75610"/>
<dbReference type="MassIVE" id="O75610"/>
<dbReference type="PaxDb" id="9606-ENSP00000272134"/>
<dbReference type="PeptideAtlas" id="O75610"/>
<dbReference type="ProteomicsDB" id="50119"/>
<dbReference type="Antibodypedia" id="34775">
    <property type="antibodies" value="358 antibodies from 27 providers"/>
</dbReference>
<dbReference type="DNASU" id="10637"/>
<dbReference type="Ensembl" id="ENST00000272134.5">
    <property type="protein sequence ID" value="ENSP00000272134.5"/>
    <property type="gene ID" value="ENSG00000243709.1"/>
</dbReference>
<dbReference type="GeneID" id="10637"/>
<dbReference type="KEGG" id="hsa:10637"/>
<dbReference type="MANE-Select" id="ENST00000272134.5">
    <property type="protein sequence ID" value="ENSP00000272134.5"/>
    <property type="RefSeq nucleotide sequence ID" value="NM_020997.4"/>
    <property type="RefSeq protein sequence ID" value="NP_066277.1"/>
</dbReference>
<dbReference type="UCSC" id="uc001hpo.3">
    <property type="organism name" value="human"/>
</dbReference>
<dbReference type="AGR" id="HGNC:6552"/>
<dbReference type="CTD" id="10637"/>
<dbReference type="DisGeNET" id="10637"/>
<dbReference type="GeneCards" id="LEFTY1"/>
<dbReference type="HGNC" id="HGNC:6552">
    <property type="gene designation" value="LEFTY1"/>
</dbReference>
<dbReference type="HPA" id="ENSG00000243709">
    <property type="expression patterns" value="Group enriched (intestine, pancreas)"/>
</dbReference>
<dbReference type="MIM" id="603037">
    <property type="type" value="gene"/>
</dbReference>
<dbReference type="neXtProt" id="NX_O75610"/>
<dbReference type="OpenTargets" id="ENSG00000243709"/>
<dbReference type="PharmGKB" id="PA30332"/>
<dbReference type="VEuPathDB" id="HostDB:ENSG00000243709"/>
<dbReference type="eggNOG" id="KOG3900">
    <property type="taxonomic scope" value="Eukaryota"/>
</dbReference>
<dbReference type="GeneTree" id="ENSGT00390000010056"/>
<dbReference type="HOGENOM" id="CLU_064098_0_0_1"/>
<dbReference type="InParanoid" id="O75610"/>
<dbReference type="OMA" id="SCAWDGV"/>
<dbReference type="OrthoDB" id="10019514at2759"/>
<dbReference type="PAN-GO" id="O75610">
    <property type="GO annotations" value="5 GO annotations based on evolutionary models"/>
</dbReference>
<dbReference type="PhylomeDB" id="O75610"/>
<dbReference type="TreeFam" id="TF106462"/>
<dbReference type="PathwayCommons" id="O75610"/>
<dbReference type="Reactome" id="R-HSA-1181150">
    <property type="pathway name" value="Signaling by NODAL"/>
</dbReference>
<dbReference type="Reactome" id="R-HSA-1433617">
    <property type="pathway name" value="Regulation of signaling by NODAL"/>
</dbReference>
<dbReference type="SignaLink" id="O75610"/>
<dbReference type="SIGNOR" id="O75610"/>
<dbReference type="BioGRID-ORCS" id="10637">
    <property type="hits" value="10 hits in 1139 CRISPR screens"/>
</dbReference>
<dbReference type="ChiTaRS" id="LEFTY1">
    <property type="organism name" value="human"/>
</dbReference>
<dbReference type="GenomeRNAi" id="10637"/>
<dbReference type="Pharos" id="O75610">
    <property type="development level" value="Tbio"/>
</dbReference>
<dbReference type="PRO" id="PR:O75610"/>
<dbReference type="Proteomes" id="UP000005640">
    <property type="component" value="Chromosome 1"/>
</dbReference>
<dbReference type="RNAct" id="O75610">
    <property type="molecule type" value="protein"/>
</dbReference>
<dbReference type="Bgee" id="ENSG00000243709">
    <property type="expression patterns" value="Expressed in mucosa of transverse colon and 91 other cell types or tissues"/>
</dbReference>
<dbReference type="GO" id="GO:0005615">
    <property type="term" value="C:extracellular space"/>
    <property type="evidence" value="ECO:0000318"/>
    <property type="project" value="GO_Central"/>
</dbReference>
<dbReference type="GO" id="GO:0005125">
    <property type="term" value="F:cytokine activity"/>
    <property type="evidence" value="ECO:0000318"/>
    <property type="project" value="GO_Central"/>
</dbReference>
<dbReference type="GO" id="GO:0008083">
    <property type="term" value="F:growth factor activity"/>
    <property type="evidence" value="ECO:0007669"/>
    <property type="project" value="UniProtKB-KW"/>
</dbReference>
<dbReference type="GO" id="GO:0005160">
    <property type="term" value="F:transforming growth factor beta receptor binding"/>
    <property type="evidence" value="ECO:0007669"/>
    <property type="project" value="InterPro"/>
</dbReference>
<dbReference type="GO" id="GO:0009948">
    <property type="term" value="P:anterior/posterior axis specification"/>
    <property type="evidence" value="ECO:0000318"/>
    <property type="project" value="GO_Central"/>
</dbReference>
<dbReference type="GO" id="GO:0007368">
    <property type="term" value="P:determination of left/right symmetry"/>
    <property type="evidence" value="ECO:0000250"/>
    <property type="project" value="BHF-UCL"/>
</dbReference>
<dbReference type="GO" id="GO:0003007">
    <property type="term" value="P:heart morphogenesis"/>
    <property type="evidence" value="ECO:0000250"/>
    <property type="project" value="BHF-UCL"/>
</dbReference>
<dbReference type="GO" id="GO:0000122">
    <property type="term" value="P:negative regulation of transcription by RNA polymerase II"/>
    <property type="evidence" value="ECO:0000250"/>
    <property type="project" value="BHF-UCL"/>
</dbReference>
<dbReference type="GO" id="GO:0007179">
    <property type="term" value="P:transforming growth factor beta receptor signaling pathway"/>
    <property type="evidence" value="ECO:0000304"/>
    <property type="project" value="ProtInc"/>
</dbReference>
<dbReference type="CDD" id="cd13758">
    <property type="entry name" value="TGF_beta_LEFTY1_2"/>
    <property type="match status" value="1"/>
</dbReference>
<dbReference type="FunFam" id="2.10.90.10:FF:000028">
    <property type="entry name" value="Left-right determination factor"/>
    <property type="match status" value="1"/>
</dbReference>
<dbReference type="FunFam" id="2.60.120.970:FF:000015">
    <property type="entry name" value="Left-right determination factor"/>
    <property type="match status" value="1"/>
</dbReference>
<dbReference type="Gene3D" id="2.60.120.970">
    <property type="match status" value="1"/>
</dbReference>
<dbReference type="Gene3D" id="2.10.90.10">
    <property type="entry name" value="Cystine-knot cytokines"/>
    <property type="match status" value="1"/>
</dbReference>
<dbReference type="InterPro" id="IPR029034">
    <property type="entry name" value="Cystine-knot_cytokine"/>
</dbReference>
<dbReference type="InterPro" id="IPR003942">
    <property type="entry name" value="LRDF"/>
</dbReference>
<dbReference type="InterPro" id="IPR001839">
    <property type="entry name" value="TGF-b_C"/>
</dbReference>
<dbReference type="InterPro" id="IPR001111">
    <property type="entry name" value="TGF-b_propeptide"/>
</dbReference>
<dbReference type="InterPro" id="IPR015615">
    <property type="entry name" value="TGF-beta-rel"/>
</dbReference>
<dbReference type="InterPro" id="IPR017948">
    <property type="entry name" value="TGFb_CS"/>
</dbReference>
<dbReference type="PANTHER" id="PTHR11848:SF257">
    <property type="entry name" value="LEFT-RIGHT DETERMINATION FACTOR 1"/>
    <property type="match status" value="1"/>
</dbReference>
<dbReference type="PANTHER" id="PTHR11848">
    <property type="entry name" value="TGF-BETA FAMILY"/>
    <property type="match status" value="1"/>
</dbReference>
<dbReference type="Pfam" id="PF00019">
    <property type="entry name" value="TGF_beta"/>
    <property type="match status" value="1"/>
</dbReference>
<dbReference type="Pfam" id="PF00688">
    <property type="entry name" value="TGFb_propeptide"/>
    <property type="match status" value="1"/>
</dbReference>
<dbReference type="PIRSF" id="PIRSF037402">
    <property type="entry name" value="TGFb4"/>
    <property type="match status" value="1"/>
</dbReference>
<dbReference type="PRINTS" id="PR01427">
    <property type="entry name" value="TGFBETA4"/>
</dbReference>
<dbReference type="SMART" id="SM00204">
    <property type="entry name" value="TGFB"/>
    <property type="match status" value="1"/>
</dbReference>
<dbReference type="SUPFAM" id="SSF57501">
    <property type="entry name" value="Cystine-knot cytokines"/>
    <property type="match status" value="1"/>
</dbReference>
<dbReference type="PROSITE" id="PS00250">
    <property type="entry name" value="TGF_BETA_1"/>
    <property type="match status" value="1"/>
</dbReference>
<dbReference type="PROSITE" id="PS51362">
    <property type="entry name" value="TGF_BETA_2"/>
    <property type="match status" value="1"/>
</dbReference>
<evidence type="ECO:0000250" key="1"/>
<evidence type="ECO:0000255" key="2"/>
<evidence type="ECO:0000269" key="3">
    <source>
    </source>
</evidence>
<evidence type="ECO:0000269" key="4">
    <source ref="4"/>
</evidence>
<evidence type="ECO:0000305" key="5"/>
<keyword id="KW-0202">Cytokine</keyword>
<keyword id="KW-0217">Developmental protein</keyword>
<keyword id="KW-1015">Disulfide bond</keyword>
<keyword id="KW-0325">Glycoprotein</keyword>
<keyword id="KW-0339">Growth factor</keyword>
<keyword id="KW-1267">Proteomics identification</keyword>
<keyword id="KW-1185">Reference proteome</keyword>
<keyword id="KW-0964">Secreted</keyword>
<keyword id="KW-0732">Signal</keyword>
<name>LFTY1_HUMAN</name>
<feature type="signal peptide" evidence="2">
    <location>
        <begin position="1"/>
        <end position="21"/>
    </location>
</feature>
<feature type="propeptide" id="PRO_0000033810" description="Or 135" evidence="2">
    <location>
        <begin position="22"/>
        <end position="76"/>
    </location>
</feature>
<feature type="chain" id="PRO_0000033811" description="Left-right determination factor 1">
    <location>
        <begin position="77"/>
        <end position="366"/>
    </location>
</feature>
<feature type="glycosylation site" description="N-linked (GlcNAc...) asparagine" evidence="2">
    <location>
        <position position="158"/>
    </location>
</feature>
<feature type="disulfide bond" evidence="1">
    <location>
        <begin position="251"/>
        <end position="264"/>
    </location>
</feature>
<feature type="disulfide bond" evidence="1">
    <location>
        <begin position="263"/>
        <end position="316"/>
    </location>
</feature>
<feature type="disulfide bond" evidence="1">
    <location>
        <begin position="293"/>
        <end position="351"/>
    </location>
</feature>
<feature type="disulfide bond" evidence="1">
    <location>
        <begin position="297"/>
        <end position="353"/>
    </location>
</feature>
<feature type="sequence variant" id="VAR_052567" description="In dbSNP:rs35273824.">
    <original>V</original>
    <variation>M</variation>
    <location>
        <position position="57"/>
    </location>
</feature>
<feature type="sequence variant" id="VAR_070888" description="In dbSNP:rs145431393." evidence="3 4">
    <original>L</original>
    <variation>S</variation>
    <location>
        <position position="92"/>
    </location>
</feature>
<feature type="sequence variant" id="VAR_070889" description="In dbSNP:rs191758097." evidence="3 4">
    <original>R</original>
    <variation>Q</variation>
    <location>
        <position position="142"/>
    </location>
</feature>
<feature type="sequence variant" id="VAR_024231" description="In dbSNP:rs360057.">
    <original>D</original>
    <variation>A</variation>
    <location>
        <position position="322"/>
    </location>
</feature>
<protein>
    <recommendedName>
        <fullName>Left-right determination factor 1</fullName>
    </recommendedName>
    <alternativeName>
        <fullName>Left-right determination factor B</fullName>
    </alternativeName>
    <alternativeName>
        <fullName>Protein lefty-1</fullName>
    </alternativeName>
    <alternativeName>
        <fullName>Protein lefty-B</fullName>
    </alternativeName>
</protein>
<comment type="function">
    <text>Required for left-right axis determination as a regulator of LEFTY2 and NODAL.</text>
</comment>
<comment type="subcellular location">
    <subcellularLocation>
        <location>Secreted</location>
    </subcellularLocation>
</comment>
<comment type="PTM">
    <text>The processing of the protein may also occur at the second R-X-X-R site located at AA 132-135. Processing appears to be regulated in a cell-type specific manner.</text>
</comment>
<comment type="similarity">
    <text evidence="5">Belongs to the TGF-beta family.</text>
</comment>
<sequence length="366" mass="40880">MQPLWLCWALWVLPLASPGAALTGEQLLGSLLRQLQLKEVPTLDRADMEELVIPTHVRAQYVALLQRSHGDRSRGKRFSQSFREVAGRFLALEASTHLLVFGMEQRLPPNSELVQAVLRLFQEPVPKAALHRHGRLSPRSARARVTVEWLRVRDDGSNRTSLIDSRLVSVHESGWKAFDVTEAVNFWQQLSRPRQPLLLQVSVQREHLGPLASGAHKLVRFASQGAPAGLGEPQLELHTLDLGDYGAQGDCDPEAPMTEGTRCCRQEMYIDLQGMKWAENWVLEPPGFLAYECVGTCRQPPEALAFKWPFLGPRQCIASETDSLPMIVSIKEGGRTRPQVVSLPNMRVQKCSCASDGALVPRRLQP</sequence>
<gene>
    <name type="primary">LEFTY1</name>
    <name type="synonym">LEFTB</name>
    <name type="synonym">LEFTYB</name>
    <name type="ORF">UNQ278/PRO317</name>
</gene>
<accession>O75610</accession>
<accession>B2R7U0</accession>
<accession>Q53H67</accession>
<accession>Q5TE94</accession>
<organism>
    <name type="scientific">Homo sapiens</name>
    <name type="common">Human</name>
    <dbReference type="NCBI Taxonomy" id="9606"/>
    <lineage>
        <taxon>Eukaryota</taxon>
        <taxon>Metazoa</taxon>
        <taxon>Chordata</taxon>
        <taxon>Craniata</taxon>
        <taxon>Vertebrata</taxon>
        <taxon>Euteleostomi</taxon>
        <taxon>Mammalia</taxon>
        <taxon>Eutheria</taxon>
        <taxon>Euarchontoglires</taxon>
        <taxon>Primates</taxon>
        <taxon>Haplorrhini</taxon>
        <taxon>Catarrhini</taxon>
        <taxon>Hominidae</taxon>
        <taxon>Homo</taxon>
    </lineage>
</organism>